<evidence type="ECO:0000255" key="1">
    <source>
        <dbReference type="PROSITE-ProRule" id="PRU00219"/>
    </source>
</evidence>
<evidence type="ECO:0000256" key="2">
    <source>
        <dbReference type="SAM" id="MobiDB-lite"/>
    </source>
</evidence>
<evidence type="ECO:0000269" key="3">
    <source>
    </source>
</evidence>
<evidence type="ECO:0000303" key="4">
    <source>
    </source>
</evidence>
<evidence type="ECO:0000305" key="5"/>
<evidence type="ECO:0007744" key="6">
    <source>
    </source>
</evidence>
<feature type="chain" id="PRO_0000076215" description="Integrator complex subunit 6-like">
    <location>
        <begin position="1"/>
        <end position="861"/>
    </location>
</feature>
<feature type="domain" description="VWFA" evidence="1">
    <location>
        <begin position="3"/>
        <end position="227"/>
    </location>
</feature>
<feature type="region of interest" description="Disordered" evidence="2">
    <location>
        <begin position="605"/>
        <end position="626"/>
    </location>
</feature>
<feature type="modified residue" description="Phosphoserine" evidence="6">
    <location>
        <position position="617"/>
    </location>
</feature>
<feature type="splice variant" id="VSP_016867" description="In isoform 3." evidence="4">
    <location>
        <begin position="1"/>
        <end position="553"/>
    </location>
</feature>
<feature type="sequence variant" id="VAR_069425" evidence="3">
    <original>I</original>
    <variation>V</variation>
    <location>
        <position position="769"/>
    </location>
</feature>
<feature type="sequence conflict" description="In Ref. 2; CAI56763." evidence="5" ref="2">
    <original>L</original>
    <variation>P</variation>
    <location>
        <position position="52"/>
    </location>
</feature>
<feature type="sequence conflict" description="In Ref. 2; CAI56763." evidence="5" ref="2">
    <location>
        <position position="428"/>
    </location>
</feature>
<organism>
    <name type="scientific">Homo sapiens</name>
    <name type="common">Human</name>
    <dbReference type="NCBI Taxonomy" id="9606"/>
    <lineage>
        <taxon>Eukaryota</taxon>
        <taxon>Metazoa</taxon>
        <taxon>Chordata</taxon>
        <taxon>Craniata</taxon>
        <taxon>Vertebrata</taxon>
        <taxon>Euteleostomi</taxon>
        <taxon>Mammalia</taxon>
        <taxon>Eutheria</taxon>
        <taxon>Euarchontoglires</taxon>
        <taxon>Primates</taxon>
        <taxon>Haplorrhini</taxon>
        <taxon>Catarrhini</taxon>
        <taxon>Hominidae</taxon>
        <taxon>Homo</taxon>
    </lineage>
</organism>
<comment type="alternative products">
    <event type="alternative splicing"/>
    <isoform>
        <id>Q5JSJ4-1</id>
        <name>1</name>
        <sequence type="displayed"/>
    </isoform>
    <isoform>
        <id>Q5JSJ4-4</id>
        <name>3</name>
        <sequence type="described" ref="VSP_016867"/>
    </isoform>
</comment>
<keyword id="KW-0025">Alternative splicing</keyword>
<keyword id="KW-0597">Phosphoprotein</keyword>
<keyword id="KW-1267">Proteomics identification</keyword>
<keyword id="KW-1185">Reference proteome</keyword>
<sequence>MPILLFLIDTSASMNQRTDLGTSYLDIAKGAVELFLKLRARDPASRGDRYMLVTYDEPPYCIKAGWKENHATFMSELKNLQASGLTTLGQALRSSFDLLNLNRLISGIDNYGQGRNPFFLEPSILITITDGNKLTSTAGVQEELHLPLNSPLPGSELTKEPFRWDQRLFALVLRLPGVASTEPEQLGSVPTDESAITQMCEVTGGRSYCVRTQRMLNQCLESLVQKVQSGVVINFEKTGPDPLPIGEDGLMDSSRPSNSFAAQPWHSCHKLIYVRPNSKTGVPVGHWPIPESFWPDQNLPSLPPRTSHPVVRFSCVDCEPMVIDKLPFDKYELEPSPLTQYILERKSPHTCWQVFVTSSGKYNELGYPFGYLKASTTLTCVNLFVMPYNYPVLLPLLDDLFKVHKLKPNLKWRQAFDSYLKTLPPYYLLTKLESERILASVGKKPPQEIGIKVKNHSGGGMSLTHNKNFRKLLKEITGETALRLTELNTKEFAGFQIGLLNKDLKPQTYRNAYDIPRRGLLDQLTRMRSNLLKTHKFIVGQDEDSLHSVPVAQMGNYQEYLKTLASPLREIDPDQPKRLHTFGNPFKQDKKGMMIDEADEFVAGPQNKVKRPGEPNSPMSSKRRRSMSLLLRKPQTPPTVTNHVGGKGPPSASWFPSYPNLIKPTLVHTDATIIHDGHEEKMENGQITPDGFLSKSAPSELINMTGDLMPPNQVDSLSDDFTSLSKDGLIQKPGSNAFVGGAKNCSLSVDDQKDPVASTLGAMPNTLQITPAMAQGINADIKHQLMKEVRKFGRKYERIFILLEEVQGPLEMKKQFVEFTIKEAARFKRRVLIQYLEKVLEKINSHHLHNNISHINSRSSC</sequence>
<protein>
    <recommendedName>
        <fullName>Integrator complex subunit 6-like</fullName>
    </recommendedName>
    <alternativeName>
        <fullName>Protein DDX26B</fullName>
    </alternativeName>
</protein>
<proteinExistence type="evidence at protein level"/>
<name>INT6L_HUMAN</name>
<accession>Q5JSJ4</accession>
<accession>Q5CZA2</accession>
<accession>Q6IPS3</accession>
<accession>Q6ZTU5</accession>
<accession>Q6ZWE4</accession>
<reference key="1">
    <citation type="journal article" date="2004" name="Nat. Genet.">
        <title>Complete sequencing and characterization of 21,243 full-length human cDNAs.</title>
        <authorList>
            <person name="Ota T."/>
            <person name="Suzuki Y."/>
            <person name="Nishikawa T."/>
            <person name="Otsuki T."/>
            <person name="Sugiyama T."/>
            <person name="Irie R."/>
            <person name="Wakamatsu A."/>
            <person name="Hayashi K."/>
            <person name="Sato H."/>
            <person name="Nagai K."/>
            <person name="Kimura K."/>
            <person name="Makita H."/>
            <person name="Sekine M."/>
            <person name="Obayashi M."/>
            <person name="Nishi T."/>
            <person name="Shibahara T."/>
            <person name="Tanaka T."/>
            <person name="Ishii S."/>
            <person name="Yamamoto J."/>
            <person name="Saito K."/>
            <person name="Kawai Y."/>
            <person name="Isono Y."/>
            <person name="Nakamura Y."/>
            <person name="Nagahari K."/>
            <person name="Murakami K."/>
            <person name="Yasuda T."/>
            <person name="Iwayanagi T."/>
            <person name="Wagatsuma M."/>
            <person name="Shiratori A."/>
            <person name="Sudo H."/>
            <person name="Hosoiri T."/>
            <person name="Kaku Y."/>
            <person name="Kodaira H."/>
            <person name="Kondo H."/>
            <person name="Sugawara M."/>
            <person name="Takahashi M."/>
            <person name="Kanda K."/>
            <person name="Yokoi T."/>
            <person name="Furuya T."/>
            <person name="Kikkawa E."/>
            <person name="Omura Y."/>
            <person name="Abe K."/>
            <person name="Kamihara K."/>
            <person name="Katsuta N."/>
            <person name="Sato K."/>
            <person name="Tanikawa M."/>
            <person name="Yamazaki M."/>
            <person name="Ninomiya K."/>
            <person name="Ishibashi T."/>
            <person name="Yamashita H."/>
            <person name="Murakawa K."/>
            <person name="Fujimori K."/>
            <person name="Tanai H."/>
            <person name="Kimata M."/>
            <person name="Watanabe M."/>
            <person name="Hiraoka S."/>
            <person name="Chiba Y."/>
            <person name="Ishida S."/>
            <person name="Ono Y."/>
            <person name="Takiguchi S."/>
            <person name="Watanabe S."/>
            <person name="Yosida M."/>
            <person name="Hotuta T."/>
            <person name="Kusano J."/>
            <person name="Kanehori K."/>
            <person name="Takahashi-Fujii A."/>
            <person name="Hara H."/>
            <person name="Tanase T.-O."/>
            <person name="Nomura Y."/>
            <person name="Togiya S."/>
            <person name="Komai F."/>
            <person name="Hara R."/>
            <person name="Takeuchi K."/>
            <person name="Arita M."/>
            <person name="Imose N."/>
            <person name="Musashino K."/>
            <person name="Yuuki H."/>
            <person name="Oshima A."/>
            <person name="Sasaki N."/>
            <person name="Aotsuka S."/>
            <person name="Yoshikawa Y."/>
            <person name="Matsunawa H."/>
            <person name="Ichihara T."/>
            <person name="Shiohata N."/>
            <person name="Sano S."/>
            <person name="Moriya S."/>
            <person name="Momiyama H."/>
            <person name="Satoh N."/>
            <person name="Takami S."/>
            <person name="Terashima Y."/>
            <person name="Suzuki O."/>
            <person name="Nakagawa S."/>
            <person name="Senoh A."/>
            <person name="Mizoguchi H."/>
            <person name="Goto Y."/>
            <person name="Shimizu F."/>
            <person name="Wakebe H."/>
            <person name="Hishigaki H."/>
            <person name="Watanabe T."/>
            <person name="Sugiyama A."/>
            <person name="Takemoto M."/>
            <person name="Kawakami B."/>
            <person name="Yamazaki M."/>
            <person name="Watanabe K."/>
            <person name="Kumagai A."/>
            <person name="Itakura S."/>
            <person name="Fukuzumi Y."/>
            <person name="Fujimori Y."/>
            <person name="Komiyama M."/>
            <person name="Tashiro H."/>
            <person name="Tanigami A."/>
            <person name="Fujiwara T."/>
            <person name="Ono T."/>
            <person name="Yamada K."/>
            <person name="Fujii Y."/>
            <person name="Ozaki K."/>
            <person name="Hirao M."/>
            <person name="Ohmori Y."/>
            <person name="Kawabata A."/>
            <person name="Hikiji T."/>
            <person name="Kobatake N."/>
            <person name="Inagaki H."/>
            <person name="Ikema Y."/>
            <person name="Okamoto S."/>
            <person name="Okitani R."/>
            <person name="Kawakami T."/>
            <person name="Noguchi S."/>
            <person name="Itoh T."/>
            <person name="Shigeta K."/>
            <person name="Senba T."/>
            <person name="Matsumura K."/>
            <person name="Nakajima Y."/>
            <person name="Mizuno T."/>
            <person name="Morinaga M."/>
            <person name="Sasaki M."/>
            <person name="Togashi T."/>
            <person name="Oyama M."/>
            <person name="Hata H."/>
            <person name="Watanabe M."/>
            <person name="Komatsu T."/>
            <person name="Mizushima-Sugano J."/>
            <person name="Satoh T."/>
            <person name="Shirai Y."/>
            <person name="Takahashi Y."/>
            <person name="Nakagawa K."/>
            <person name="Okumura K."/>
            <person name="Nagase T."/>
            <person name="Nomura N."/>
            <person name="Kikuchi H."/>
            <person name="Masuho Y."/>
            <person name="Yamashita R."/>
            <person name="Nakai K."/>
            <person name="Yada T."/>
            <person name="Nakamura Y."/>
            <person name="Ohara O."/>
            <person name="Isogai T."/>
            <person name="Sugano S."/>
        </authorList>
    </citation>
    <scope>NUCLEOTIDE SEQUENCE [LARGE SCALE MRNA] (ISOFORM 3)</scope>
    <source>
        <tissue>Brain cortex</tissue>
    </source>
</reference>
<reference key="2">
    <citation type="journal article" date="2007" name="BMC Genomics">
        <title>The full-ORF clone resource of the German cDNA consortium.</title>
        <authorList>
            <person name="Bechtel S."/>
            <person name="Rosenfelder H."/>
            <person name="Duda A."/>
            <person name="Schmidt C.P."/>
            <person name="Ernst U."/>
            <person name="Wellenreuther R."/>
            <person name="Mehrle A."/>
            <person name="Schuster C."/>
            <person name="Bahr A."/>
            <person name="Bloecker H."/>
            <person name="Heubner D."/>
            <person name="Hoerlein A."/>
            <person name="Michel G."/>
            <person name="Wedler H."/>
            <person name="Koehrer K."/>
            <person name="Ottenwaelder B."/>
            <person name="Poustka A."/>
            <person name="Wiemann S."/>
            <person name="Schupp I."/>
        </authorList>
    </citation>
    <scope>NUCLEOTIDE SEQUENCE [LARGE SCALE MRNA] (ISOFORM 1)</scope>
    <source>
        <tissue>Endometrial tumor</tissue>
    </source>
</reference>
<reference key="3">
    <citation type="journal article" date="2005" name="Nature">
        <title>The DNA sequence of the human X chromosome.</title>
        <authorList>
            <person name="Ross M.T."/>
            <person name="Grafham D.V."/>
            <person name="Coffey A.J."/>
            <person name="Scherer S."/>
            <person name="McLay K."/>
            <person name="Muzny D."/>
            <person name="Platzer M."/>
            <person name="Howell G.R."/>
            <person name="Burrows C."/>
            <person name="Bird C.P."/>
            <person name="Frankish A."/>
            <person name="Lovell F.L."/>
            <person name="Howe K.L."/>
            <person name="Ashurst J.L."/>
            <person name="Fulton R.S."/>
            <person name="Sudbrak R."/>
            <person name="Wen G."/>
            <person name="Jones M.C."/>
            <person name="Hurles M.E."/>
            <person name="Andrews T.D."/>
            <person name="Scott C.E."/>
            <person name="Searle S."/>
            <person name="Ramser J."/>
            <person name="Whittaker A."/>
            <person name="Deadman R."/>
            <person name="Carter N.P."/>
            <person name="Hunt S.E."/>
            <person name="Chen R."/>
            <person name="Cree A."/>
            <person name="Gunaratne P."/>
            <person name="Havlak P."/>
            <person name="Hodgson A."/>
            <person name="Metzker M.L."/>
            <person name="Richards S."/>
            <person name="Scott G."/>
            <person name="Steffen D."/>
            <person name="Sodergren E."/>
            <person name="Wheeler D.A."/>
            <person name="Worley K.C."/>
            <person name="Ainscough R."/>
            <person name="Ambrose K.D."/>
            <person name="Ansari-Lari M.A."/>
            <person name="Aradhya S."/>
            <person name="Ashwell R.I."/>
            <person name="Babbage A.K."/>
            <person name="Bagguley C.L."/>
            <person name="Ballabio A."/>
            <person name="Banerjee R."/>
            <person name="Barker G.E."/>
            <person name="Barlow K.F."/>
            <person name="Barrett I.P."/>
            <person name="Bates K.N."/>
            <person name="Beare D.M."/>
            <person name="Beasley H."/>
            <person name="Beasley O."/>
            <person name="Beck A."/>
            <person name="Bethel G."/>
            <person name="Blechschmidt K."/>
            <person name="Brady N."/>
            <person name="Bray-Allen S."/>
            <person name="Bridgeman A.M."/>
            <person name="Brown A.J."/>
            <person name="Brown M.J."/>
            <person name="Bonnin D."/>
            <person name="Bruford E.A."/>
            <person name="Buhay C."/>
            <person name="Burch P."/>
            <person name="Burford D."/>
            <person name="Burgess J."/>
            <person name="Burrill W."/>
            <person name="Burton J."/>
            <person name="Bye J.M."/>
            <person name="Carder C."/>
            <person name="Carrel L."/>
            <person name="Chako J."/>
            <person name="Chapman J.C."/>
            <person name="Chavez D."/>
            <person name="Chen E."/>
            <person name="Chen G."/>
            <person name="Chen Y."/>
            <person name="Chen Z."/>
            <person name="Chinault C."/>
            <person name="Ciccodicola A."/>
            <person name="Clark S.Y."/>
            <person name="Clarke G."/>
            <person name="Clee C.M."/>
            <person name="Clegg S."/>
            <person name="Clerc-Blankenburg K."/>
            <person name="Clifford K."/>
            <person name="Cobley V."/>
            <person name="Cole C.G."/>
            <person name="Conquer J.S."/>
            <person name="Corby N."/>
            <person name="Connor R.E."/>
            <person name="David R."/>
            <person name="Davies J."/>
            <person name="Davis C."/>
            <person name="Davis J."/>
            <person name="Delgado O."/>
            <person name="Deshazo D."/>
            <person name="Dhami P."/>
            <person name="Ding Y."/>
            <person name="Dinh H."/>
            <person name="Dodsworth S."/>
            <person name="Draper H."/>
            <person name="Dugan-Rocha S."/>
            <person name="Dunham A."/>
            <person name="Dunn M."/>
            <person name="Durbin K.J."/>
            <person name="Dutta I."/>
            <person name="Eades T."/>
            <person name="Ellwood M."/>
            <person name="Emery-Cohen A."/>
            <person name="Errington H."/>
            <person name="Evans K.L."/>
            <person name="Faulkner L."/>
            <person name="Francis F."/>
            <person name="Frankland J."/>
            <person name="Fraser A.E."/>
            <person name="Galgoczy P."/>
            <person name="Gilbert J."/>
            <person name="Gill R."/>
            <person name="Gloeckner G."/>
            <person name="Gregory S.G."/>
            <person name="Gribble S."/>
            <person name="Griffiths C."/>
            <person name="Grocock R."/>
            <person name="Gu Y."/>
            <person name="Gwilliam R."/>
            <person name="Hamilton C."/>
            <person name="Hart E.A."/>
            <person name="Hawes A."/>
            <person name="Heath P.D."/>
            <person name="Heitmann K."/>
            <person name="Hennig S."/>
            <person name="Hernandez J."/>
            <person name="Hinzmann B."/>
            <person name="Ho S."/>
            <person name="Hoffs M."/>
            <person name="Howden P.J."/>
            <person name="Huckle E.J."/>
            <person name="Hume J."/>
            <person name="Hunt P.J."/>
            <person name="Hunt A.R."/>
            <person name="Isherwood J."/>
            <person name="Jacob L."/>
            <person name="Johnson D."/>
            <person name="Jones S."/>
            <person name="de Jong P.J."/>
            <person name="Joseph S.S."/>
            <person name="Keenan S."/>
            <person name="Kelly S."/>
            <person name="Kershaw J.K."/>
            <person name="Khan Z."/>
            <person name="Kioschis P."/>
            <person name="Klages S."/>
            <person name="Knights A.J."/>
            <person name="Kosiura A."/>
            <person name="Kovar-Smith C."/>
            <person name="Laird G.K."/>
            <person name="Langford C."/>
            <person name="Lawlor S."/>
            <person name="Leversha M."/>
            <person name="Lewis L."/>
            <person name="Liu W."/>
            <person name="Lloyd C."/>
            <person name="Lloyd D.M."/>
            <person name="Loulseged H."/>
            <person name="Loveland J.E."/>
            <person name="Lovell J.D."/>
            <person name="Lozado R."/>
            <person name="Lu J."/>
            <person name="Lyne R."/>
            <person name="Ma J."/>
            <person name="Maheshwari M."/>
            <person name="Matthews L.H."/>
            <person name="McDowall J."/>
            <person name="McLaren S."/>
            <person name="McMurray A."/>
            <person name="Meidl P."/>
            <person name="Meitinger T."/>
            <person name="Milne S."/>
            <person name="Miner G."/>
            <person name="Mistry S.L."/>
            <person name="Morgan M."/>
            <person name="Morris S."/>
            <person name="Mueller I."/>
            <person name="Mullikin J.C."/>
            <person name="Nguyen N."/>
            <person name="Nordsiek G."/>
            <person name="Nyakatura G."/>
            <person name="O'dell C.N."/>
            <person name="Okwuonu G."/>
            <person name="Palmer S."/>
            <person name="Pandian R."/>
            <person name="Parker D."/>
            <person name="Parrish J."/>
            <person name="Pasternak S."/>
            <person name="Patel D."/>
            <person name="Pearce A.V."/>
            <person name="Pearson D.M."/>
            <person name="Pelan S.E."/>
            <person name="Perez L."/>
            <person name="Porter K.M."/>
            <person name="Ramsey Y."/>
            <person name="Reichwald K."/>
            <person name="Rhodes S."/>
            <person name="Ridler K.A."/>
            <person name="Schlessinger D."/>
            <person name="Schueler M.G."/>
            <person name="Sehra H.K."/>
            <person name="Shaw-Smith C."/>
            <person name="Shen H."/>
            <person name="Sheridan E.M."/>
            <person name="Shownkeen R."/>
            <person name="Skuce C.D."/>
            <person name="Smith M.L."/>
            <person name="Sotheran E.C."/>
            <person name="Steingruber H.E."/>
            <person name="Steward C.A."/>
            <person name="Storey R."/>
            <person name="Swann R.M."/>
            <person name="Swarbreck D."/>
            <person name="Tabor P.E."/>
            <person name="Taudien S."/>
            <person name="Taylor T."/>
            <person name="Teague B."/>
            <person name="Thomas K."/>
            <person name="Thorpe A."/>
            <person name="Timms K."/>
            <person name="Tracey A."/>
            <person name="Trevanion S."/>
            <person name="Tromans A.C."/>
            <person name="d'Urso M."/>
            <person name="Verduzco D."/>
            <person name="Villasana D."/>
            <person name="Waldron L."/>
            <person name="Wall M."/>
            <person name="Wang Q."/>
            <person name="Warren J."/>
            <person name="Warry G.L."/>
            <person name="Wei X."/>
            <person name="West A."/>
            <person name="Whitehead S.L."/>
            <person name="Whiteley M.N."/>
            <person name="Wilkinson J.E."/>
            <person name="Willey D.L."/>
            <person name="Williams G."/>
            <person name="Williams L."/>
            <person name="Williamson A."/>
            <person name="Williamson H."/>
            <person name="Wilming L."/>
            <person name="Woodmansey R.L."/>
            <person name="Wray P.W."/>
            <person name="Yen J."/>
            <person name="Zhang J."/>
            <person name="Zhou J."/>
            <person name="Zoghbi H."/>
            <person name="Zorilla S."/>
            <person name="Buck D."/>
            <person name="Reinhardt R."/>
            <person name="Poustka A."/>
            <person name="Rosenthal A."/>
            <person name="Lehrach H."/>
            <person name="Meindl A."/>
            <person name="Minx P.J."/>
            <person name="Hillier L.W."/>
            <person name="Willard H.F."/>
            <person name="Wilson R.K."/>
            <person name="Waterston R.H."/>
            <person name="Rice C.M."/>
            <person name="Vaudin M."/>
            <person name="Coulson A."/>
            <person name="Nelson D.L."/>
            <person name="Weinstock G."/>
            <person name="Sulston J.E."/>
            <person name="Durbin R.M."/>
            <person name="Hubbard T."/>
            <person name="Gibbs R.A."/>
            <person name="Beck S."/>
            <person name="Rogers J."/>
            <person name="Bentley D.R."/>
        </authorList>
    </citation>
    <scope>NUCLEOTIDE SEQUENCE [LARGE SCALE GENOMIC DNA]</scope>
</reference>
<reference key="4">
    <citation type="journal article" date="2011" name="Sci. Signal.">
        <title>System-wide temporal characterization of the proteome and phosphoproteome of human embryonic stem cell differentiation.</title>
        <authorList>
            <person name="Rigbolt K.T."/>
            <person name="Prokhorova T.A."/>
            <person name="Akimov V."/>
            <person name="Henningsen J."/>
            <person name="Johansen P.T."/>
            <person name="Kratchmarova I."/>
            <person name="Kassem M."/>
            <person name="Mann M."/>
            <person name="Olsen J.V."/>
            <person name="Blagoev B."/>
        </authorList>
    </citation>
    <scope>IDENTIFICATION BY MASS SPECTROMETRY [LARGE SCALE ANALYSIS]</scope>
</reference>
<reference key="5">
    <citation type="journal article" date="2013" name="J. Proteome Res.">
        <title>Toward a comprehensive characterization of a human cancer cell phosphoproteome.</title>
        <authorList>
            <person name="Zhou H."/>
            <person name="Di Palma S."/>
            <person name="Preisinger C."/>
            <person name="Peng M."/>
            <person name="Polat A.N."/>
            <person name="Heck A.J."/>
            <person name="Mohammed S."/>
        </authorList>
    </citation>
    <scope>PHOSPHORYLATION [LARGE SCALE ANALYSIS] AT SER-617</scope>
    <scope>IDENTIFICATION BY MASS SPECTROMETRY [LARGE SCALE ANALYSIS]</scope>
    <source>
        <tissue>Erythroleukemia</tissue>
    </source>
</reference>
<reference key="6">
    <citation type="journal article" date="2012" name="N. Engl. J. Med.">
        <title>Diagnostic exome sequencing in persons with severe intellectual disability.</title>
        <authorList>
            <person name="de Ligt J."/>
            <person name="Willemsen M.H."/>
            <person name="van Bon B.W."/>
            <person name="Kleefstra T."/>
            <person name="Yntema H.G."/>
            <person name="Kroes T."/>
            <person name="Vulto-van Silfhout A.T."/>
            <person name="Koolen D.A."/>
            <person name="de Vries P."/>
            <person name="Gilissen C."/>
            <person name="del Rosario M."/>
            <person name="Hoischen A."/>
            <person name="Scheffer H."/>
            <person name="de Vries B.B."/>
            <person name="Brunner H.G."/>
            <person name="Veltman J.A."/>
            <person name="Vissers L.E."/>
        </authorList>
    </citation>
    <scope>VARIANT VAL-769</scope>
</reference>
<gene>
    <name type="primary">INTS6L</name>
    <name type="synonym">DDX26B</name>
</gene>
<dbReference type="EMBL" id="AK123209">
    <property type="protein sequence ID" value="BAC85559.1"/>
    <property type="molecule type" value="mRNA"/>
</dbReference>
<dbReference type="EMBL" id="CR936620">
    <property type="protein sequence ID" value="CAI56763.1"/>
    <property type="molecule type" value="Transcribed_RNA"/>
</dbReference>
<dbReference type="EMBL" id="AL357834">
    <property type="status" value="NOT_ANNOTATED_CDS"/>
    <property type="molecule type" value="Genomic_DNA"/>
</dbReference>
<dbReference type="EMBL" id="AL391380">
    <property type="status" value="NOT_ANNOTATED_CDS"/>
    <property type="molecule type" value="Genomic_DNA"/>
</dbReference>
<dbReference type="CCDS" id="CCDS35401.1">
    <molecule id="Q5JSJ4-1"/>
</dbReference>
<dbReference type="RefSeq" id="NP_872346.3">
    <molecule id="Q5JSJ4-1"/>
    <property type="nucleotide sequence ID" value="NM_182540.7"/>
</dbReference>
<dbReference type="SMR" id="Q5JSJ4"/>
<dbReference type="BioGRID" id="128475">
    <property type="interactions" value="20"/>
</dbReference>
<dbReference type="FunCoup" id="Q5JSJ4">
    <property type="interactions" value="797"/>
</dbReference>
<dbReference type="IntAct" id="Q5JSJ4">
    <property type="interactions" value="18"/>
</dbReference>
<dbReference type="STRING" id="9606.ENSP00000491427"/>
<dbReference type="iPTMnet" id="Q5JSJ4"/>
<dbReference type="PhosphoSitePlus" id="Q5JSJ4"/>
<dbReference type="BioMuta" id="INTS6L"/>
<dbReference type="DMDM" id="74742010"/>
<dbReference type="jPOST" id="Q5JSJ4"/>
<dbReference type="MassIVE" id="Q5JSJ4"/>
<dbReference type="PaxDb" id="9606-ENSP00000359788"/>
<dbReference type="PeptideAtlas" id="Q5JSJ4"/>
<dbReference type="ProteomicsDB" id="63154">
    <molecule id="Q5JSJ4-1"/>
</dbReference>
<dbReference type="ProteomicsDB" id="63155">
    <molecule id="Q5JSJ4-4"/>
</dbReference>
<dbReference type="Pumba" id="Q5JSJ4"/>
<dbReference type="Antibodypedia" id="538">
    <property type="antibodies" value="38 antibodies from 15 providers"/>
</dbReference>
<dbReference type="DNASU" id="203522"/>
<dbReference type="Ensembl" id="ENST00000370752.4">
    <molecule id="Q5JSJ4-1"/>
    <property type="protein sequence ID" value="ENSP00000359788.4"/>
    <property type="gene ID" value="ENSG00000165359.16"/>
</dbReference>
<dbReference type="GeneID" id="203522"/>
<dbReference type="KEGG" id="hsa:203522"/>
<dbReference type="UCSC" id="uc004eyw.5">
    <molecule id="Q5JSJ4-1"/>
    <property type="organism name" value="human"/>
</dbReference>
<dbReference type="AGR" id="HGNC:27334"/>
<dbReference type="CTD" id="203522"/>
<dbReference type="DisGeNET" id="203522"/>
<dbReference type="GeneCards" id="INTS6L"/>
<dbReference type="HGNC" id="HGNC:27334">
    <property type="gene designation" value="INTS6L"/>
</dbReference>
<dbReference type="HPA" id="ENSG00000165359">
    <property type="expression patterns" value="Low tissue specificity"/>
</dbReference>
<dbReference type="neXtProt" id="NX_Q5JSJ4"/>
<dbReference type="OpenTargets" id="ENSG00000165359"/>
<dbReference type="PharmGKB" id="PA134921149"/>
<dbReference type="VEuPathDB" id="HostDB:ENSG00000165359"/>
<dbReference type="eggNOG" id="KOG3768">
    <property type="taxonomic scope" value="Eukaryota"/>
</dbReference>
<dbReference type="GeneTree" id="ENSGT00390000016655"/>
<dbReference type="HOGENOM" id="CLU_006789_0_0_1"/>
<dbReference type="InParanoid" id="Q5JSJ4"/>
<dbReference type="OrthoDB" id="9449012at2759"/>
<dbReference type="PAN-GO" id="Q5JSJ4">
    <property type="GO annotations" value="2 GO annotations based on evolutionary models"/>
</dbReference>
<dbReference type="PhylomeDB" id="Q5JSJ4"/>
<dbReference type="TreeFam" id="TF323386"/>
<dbReference type="PathwayCommons" id="Q5JSJ4"/>
<dbReference type="SignaLink" id="Q5JSJ4"/>
<dbReference type="BioGRID-ORCS" id="203522">
    <property type="hits" value="13 hits in 757 CRISPR screens"/>
</dbReference>
<dbReference type="ChiTaRS" id="INTS6L">
    <property type="organism name" value="human"/>
</dbReference>
<dbReference type="GenomeRNAi" id="203522"/>
<dbReference type="Pharos" id="Q5JSJ4">
    <property type="development level" value="Tdark"/>
</dbReference>
<dbReference type="PRO" id="PR:Q5JSJ4"/>
<dbReference type="Proteomes" id="UP000005640">
    <property type="component" value="Chromosome X"/>
</dbReference>
<dbReference type="RNAct" id="Q5JSJ4">
    <property type="molecule type" value="protein"/>
</dbReference>
<dbReference type="Bgee" id="ENSG00000165359">
    <property type="expression patterns" value="Expressed in cerebellar hemisphere and 146 other cell types or tissues"/>
</dbReference>
<dbReference type="ExpressionAtlas" id="Q5JSJ4">
    <property type="expression patterns" value="baseline and differential"/>
</dbReference>
<dbReference type="GO" id="GO:0032039">
    <property type="term" value="C:integrator complex"/>
    <property type="evidence" value="ECO:0000318"/>
    <property type="project" value="GO_Central"/>
</dbReference>
<dbReference type="GO" id="GO:0034472">
    <property type="term" value="P:snRNA 3'-end processing"/>
    <property type="evidence" value="ECO:0000318"/>
    <property type="project" value="GO_Central"/>
</dbReference>
<dbReference type="CDD" id="cd00198">
    <property type="entry name" value="vWFA"/>
    <property type="match status" value="1"/>
</dbReference>
<dbReference type="FunFam" id="3.40.50.410:FF:000010">
    <property type="entry name" value="Integrator complex subunit 6 like"/>
    <property type="match status" value="1"/>
</dbReference>
<dbReference type="Gene3D" id="3.40.50.410">
    <property type="entry name" value="von Willebrand factor, type A domain"/>
    <property type="match status" value="1"/>
</dbReference>
<dbReference type="InterPro" id="IPR029307">
    <property type="entry name" value="INT_SG_DDX_CT_C"/>
</dbReference>
<dbReference type="InterPro" id="IPR051113">
    <property type="entry name" value="Integrator_subunit6"/>
</dbReference>
<dbReference type="InterPro" id="IPR002035">
    <property type="entry name" value="VWF_A"/>
</dbReference>
<dbReference type="InterPro" id="IPR036465">
    <property type="entry name" value="vWFA_dom_sf"/>
</dbReference>
<dbReference type="PANTHER" id="PTHR12957">
    <property type="entry name" value="DEAD/H BOX POLYPEPTIDE 26/DICE1-RELATED"/>
    <property type="match status" value="1"/>
</dbReference>
<dbReference type="PANTHER" id="PTHR12957:SF22">
    <property type="entry name" value="INTEGRATOR COMPLEX SUBUNIT 6-LIKE"/>
    <property type="match status" value="1"/>
</dbReference>
<dbReference type="Pfam" id="PF25462">
    <property type="entry name" value="Beta-barrel_INTS6"/>
    <property type="match status" value="1"/>
</dbReference>
<dbReference type="Pfam" id="PF15300">
    <property type="entry name" value="INT_SG_DDX_CT_C"/>
    <property type="match status" value="1"/>
</dbReference>
<dbReference type="Pfam" id="PF13519">
    <property type="entry name" value="VWA_2"/>
    <property type="match status" value="1"/>
</dbReference>
<dbReference type="SUPFAM" id="SSF53300">
    <property type="entry name" value="vWA-like"/>
    <property type="match status" value="1"/>
</dbReference>
<dbReference type="PROSITE" id="PS50234">
    <property type="entry name" value="VWFA"/>
    <property type="match status" value="1"/>
</dbReference>